<protein>
    <recommendedName>
        <fullName>Mitochondrial import receptor subunit TOM6</fullName>
    </recommendedName>
    <alternativeName>
        <fullName>Mitochondrial import site protein ISP6</fullName>
    </alternativeName>
    <alternativeName>
        <fullName>Translocase of outer membrane 6 kDa subunit</fullName>
    </alternativeName>
</protein>
<sequence length="61" mass="6408">MDGMFAMPGAAAGAASPQQPKSRFQAFKESPLYTIALNGAFFVAGVAFIQSPLMDMLAPQL</sequence>
<gene>
    <name type="primary">TOM6</name>
    <name type="synonym">ISP6</name>
    <name type="ordered locus">YOR045W</name>
</gene>
<feature type="chain" id="PRO_0000210820" description="Mitochondrial import receptor subunit TOM6">
    <location>
        <begin position="1"/>
        <end position="61"/>
    </location>
</feature>
<feature type="topological domain" description="Cytoplasmic" evidence="1">
    <location>
        <begin position="1"/>
        <end position="31"/>
    </location>
</feature>
<feature type="transmembrane region" description="Helical" evidence="1">
    <location>
        <begin position="32"/>
        <end position="52"/>
    </location>
</feature>
<feature type="topological domain" description="Mitochondrial intermembrane" evidence="1">
    <location>
        <begin position="53"/>
        <end position="61"/>
    </location>
</feature>
<feature type="region of interest" description="Disordered" evidence="2">
    <location>
        <begin position="1"/>
        <end position="22"/>
    </location>
</feature>
<feature type="compositionally biased region" description="Low complexity" evidence="2">
    <location>
        <begin position="1"/>
        <end position="15"/>
    </location>
</feature>
<feature type="modified residue" description="N-acetylmethionine" evidence="6">
    <location>
        <position position="1"/>
    </location>
</feature>
<feature type="helix" evidence="7">
    <location>
        <begin position="31"/>
        <end position="50"/>
    </location>
</feature>
<feature type="helix" evidence="7">
    <location>
        <begin position="52"/>
        <end position="57"/>
    </location>
</feature>
<keyword id="KW-0002">3D-structure</keyword>
<keyword id="KW-0007">Acetylation</keyword>
<keyword id="KW-0472">Membrane</keyword>
<keyword id="KW-0496">Mitochondrion</keyword>
<keyword id="KW-1000">Mitochondrion outer membrane</keyword>
<keyword id="KW-0653">Protein transport</keyword>
<keyword id="KW-1185">Reference proteome</keyword>
<keyword id="KW-0812">Transmembrane</keyword>
<keyword id="KW-1133">Transmembrane helix</keyword>
<keyword id="KW-0813">Transport</keyword>
<name>TOM6_YEAST</name>
<accession>P33448</accession>
<accession>D6W2B1</accession>
<dbReference type="EMBL" id="Z22815">
    <property type="protein sequence ID" value="CAA80469.1"/>
    <property type="molecule type" value="Genomic_DNA"/>
</dbReference>
<dbReference type="EMBL" id="Z74953">
    <property type="protein sequence ID" value="CAA99236.1"/>
    <property type="molecule type" value="Genomic_DNA"/>
</dbReference>
<dbReference type="EMBL" id="AY693051">
    <property type="protein sequence ID" value="AAT93070.1"/>
    <property type="molecule type" value="Genomic_DNA"/>
</dbReference>
<dbReference type="EMBL" id="BK006948">
    <property type="protein sequence ID" value="DAA10827.1"/>
    <property type="molecule type" value="Genomic_DNA"/>
</dbReference>
<dbReference type="PIR" id="S35320">
    <property type="entry name" value="S35320"/>
</dbReference>
<dbReference type="RefSeq" id="NP_014688.1">
    <property type="nucleotide sequence ID" value="NM_001183464.1"/>
</dbReference>
<dbReference type="PDB" id="6JNF">
    <property type="method" value="EM"/>
    <property type="resolution" value="3.81 A"/>
    <property type="chains" value="E/J=1-61"/>
</dbReference>
<dbReference type="PDB" id="6UCU">
    <property type="method" value="EM"/>
    <property type="resolution" value="3.06 A"/>
    <property type="chains" value="D/L=1-61"/>
</dbReference>
<dbReference type="PDB" id="6UCV">
    <property type="method" value="EM"/>
    <property type="resolution" value="4.10 A"/>
    <property type="chains" value="D/L/d/l=1-61"/>
</dbReference>
<dbReference type="PDB" id="7E4I">
    <property type="method" value="EM"/>
    <property type="resolution" value="3.05 A"/>
    <property type="chains" value="F=2-61"/>
</dbReference>
<dbReference type="PDB" id="8HCO">
    <property type="method" value="EM"/>
    <property type="resolution" value="4.10 A"/>
    <property type="chains" value="D/L=1-61"/>
</dbReference>
<dbReference type="PDB" id="8W5J">
    <property type="method" value="EM"/>
    <property type="resolution" value="4.40 A"/>
    <property type="chains" value="D/L=1-61"/>
</dbReference>
<dbReference type="PDB" id="8W5K">
    <property type="method" value="EM"/>
    <property type="resolution" value="3.60 A"/>
    <property type="chains" value="D/L=1-61"/>
</dbReference>
<dbReference type="PDB" id="8XKW">
    <property type="method" value="EM"/>
    <property type="resolution" value="3.64 A"/>
    <property type="chains" value="D/I=1-61"/>
</dbReference>
<dbReference type="PDB" id="8XKX">
    <property type="method" value="EM"/>
    <property type="resolution" value="3.70 A"/>
    <property type="chains" value="D/I=1-61"/>
</dbReference>
<dbReference type="PDB" id="8XKY">
    <property type="method" value="EM"/>
    <property type="resolution" value="3.42 A"/>
    <property type="chains" value="D/I=1-61"/>
</dbReference>
<dbReference type="PDBsum" id="6JNF"/>
<dbReference type="PDBsum" id="6UCU"/>
<dbReference type="PDBsum" id="6UCV"/>
<dbReference type="PDBsum" id="7E4I"/>
<dbReference type="PDBsum" id="8HCO"/>
<dbReference type="PDBsum" id="8W5J"/>
<dbReference type="PDBsum" id="8W5K"/>
<dbReference type="PDBsum" id="8XKW"/>
<dbReference type="PDBsum" id="8XKX"/>
<dbReference type="PDBsum" id="8XKY"/>
<dbReference type="EMDB" id="EMD-20728"/>
<dbReference type="EMDB" id="EMD-20729"/>
<dbReference type="EMDB" id="EMD-30986"/>
<dbReference type="EMDB" id="EMD-34660"/>
<dbReference type="EMDB" id="EMD-37294"/>
<dbReference type="EMDB" id="EMD-37295"/>
<dbReference type="EMDB" id="EMD-38429"/>
<dbReference type="EMDB" id="EMD-38430"/>
<dbReference type="EMDB" id="EMD-38431"/>
<dbReference type="EMDB" id="EMD-9851"/>
<dbReference type="SMR" id="P33448"/>
<dbReference type="BioGRID" id="34446">
    <property type="interactions" value="170"/>
</dbReference>
<dbReference type="ComplexPortal" id="CPX-473">
    <property type="entry name" value="TOM40 mitochondrial outer membrane translocase core complex"/>
</dbReference>
<dbReference type="ComplexPortal" id="CPX-474">
    <property type="entry name" value="TOM40 mitochondrial outer membrane translocase holocomplex"/>
</dbReference>
<dbReference type="DIP" id="DIP-3835N"/>
<dbReference type="FunCoup" id="P33448">
    <property type="interactions" value="73"/>
</dbReference>
<dbReference type="IntAct" id="P33448">
    <property type="interactions" value="4"/>
</dbReference>
<dbReference type="STRING" id="4932.YOR045W"/>
<dbReference type="TCDB" id="3.A.8.1.1">
    <property type="family name" value="the mitochondrial protein translocase (mpt) family"/>
</dbReference>
<dbReference type="iPTMnet" id="P33448"/>
<dbReference type="PaxDb" id="4932-YOR045W"/>
<dbReference type="PeptideAtlas" id="P33448"/>
<dbReference type="EnsemblFungi" id="YOR045W_mRNA">
    <property type="protein sequence ID" value="YOR045W"/>
    <property type="gene ID" value="YOR045W"/>
</dbReference>
<dbReference type="GeneID" id="854210"/>
<dbReference type="KEGG" id="sce:YOR045W"/>
<dbReference type="AGR" id="SGD:S000005571"/>
<dbReference type="SGD" id="S000005571">
    <property type="gene designation" value="TOM6"/>
</dbReference>
<dbReference type="VEuPathDB" id="FungiDB:YOR045W"/>
<dbReference type="eggNOG" id="ENOG502S7PB">
    <property type="taxonomic scope" value="Eukaryota"/>
</dbReference>
<dbReference type="HOGENOM" id="CLU_207409_0_0_1"/>
<dbReference type="InParanoid" id="P33448"/>
<dbReference type="OMA" id="DMMAPQL"/>
<dbReference type="OrthoDB" id="3991365at2759"/>
<dbReference type="BioCyc" id="YEAST:G3O-33589-MONOMER"/>
<dbReference type="BioGRID-ORCS" id="854210">
    <property type="hits" value="9 hits in 10 CRISPR screens"/>
</dbReference>
<dbReference type="PRO" id="PR:P33448"/>
<dbReference type="Proteomes" id="UP000002311">
    <property type="component" value="Chromosome XV"/>
</dbReference>
<dbReference type="RNAct" id="P33448">
    <property type="molecule type" value="protein"/>
</dbReference>
<dbReference type="GO" id="GO:0005741">
    <property type="term" value="C:mitochondrial outer membrane"/>
    <property type="evidence" value="ECO:0000314"/>
    <property type="project" value="ComplexPortal"/>
</dbReference>
<dbReference type="GO" id="GO:0005742">
    <property type="term" value="C:mitochondrial outer membrane translocase complex"/>
    <property type="evidence" value="ECO:0000315"/>
    <property type="project" value="SGD"/>
</dbReference>
<dbReference type="GO" id="GO:0005739">
    <property type="term" value="C:mitochondrion"/>
    <property type="evidence" value="ECO:0007005"/>
    <property type="project" value="SGD"/>
</dbReference>
<dbReference type="GO" id="GO:0070096">
    <property type="term" value="P:mitochondrial outer membrane translocase complex assembly"/>
    <property type="evidence" value="ECO:0000314"/>
    <property type="project" value="SGD"/>
</dbReference>
<dbReference type="GO" id="GO:0030150">
    <property type="term" value="P:protein import into mitochondrial matrix"/>
    <property type="evidence" value="ECO:0000315"/>
    <property type="project" value="SGD"/>
</dbReference>
<dbReference type="GO" id="GO:0045040">
    <property type="term" value="P:protein insertion into mitochondrial outer membrane"/>
    <property type="evidence" value="ECO:0000314"/>
    <property type="project" value="ComplexPortal"/>
</dbReference>
<dbReference type="InterPro" id="IPR020266">
    <property type="entry name" value="Tom6"/>
</dbReference>
<dbReference type="Pfam" id="PF17112">
    <property type="entry name" value="Tom6"/>
    <property type="match status" value="1"/>
</dbReference>
<comment type="function">
    <text evidence="3">Component of the TOM (translocase of outer membrane) receptor complex responsible for the recognition and translocation of cytosolically synthesized mitochondrial preproteins. TOM6 is involved in assembly and stability of the TOM complex.</text>
</comment>
<comment type="subunit">
    <text evidence="4">Forms part of the TOM (translocase of outer membrane) complex that consists of at least 7 different proteins (TOM5, TOM6, TOM7, TOM20, TOM22, TOM40 and TOM70).</text>
</comment>
<comment type="subcellular location">
    <subcellularLocation>
        <location>Mitochondrion outer membrane</location>
        <topology>Single-pass membrane protein</topology>
    </subcellularLocation>
</comment>
<comment type="similarity">
    <text evidence="5">Belongs to the Tom6 family.</text>
</comment>
<reference key="1">
    <citation type="journal article" date="1993" name="EMBO J.">
        <title>Genetic and biochemical characterization of ISP6, a small mitochondrial outer membrane protein associated with the protein translocation complex.</title>
        <authorList>
            <person name="Kassenbrock C.K."/>
            <person name="Cao W."/>
            <person name="Douglas M.G."/>
        </authorList>
    </citation>
    <scope>NUCLEOTIDE SEQUENCE [GENOMIC DNA]</scope>
</reference>
<reference key="2">
    <citation type="journal article" date="1997" name="Nature">
        <title>The nucleotide sequence of Saccharomyces cerevisiae chromosome XV.</title>
        <authorList>
            <person name="Dujon B."/>
            <person name="Albermann K."/>
            <person name="Aldea M."/>
            <person name="Alexandraki D."/>
            <person name="Ansorge W."/>
            <person name="Arino J."/>
            <person name="Benes V."/>
            <person name="Bohn C."/>
            <person name="Bolotin-Fukuhara M."/>
            <person name="Bordonne R."/>
            <person name="Boyer J."/>
            <person name="Camasses A."/>
            <person name="Casamayor A."/>
            <person name="Casas C."/>
            <person name="Cheret G."/>
            <person name="Cziepluch C."/>
            <person name="Daignan-Fornier B."/>
            <person name="Dang V.-D."/>
            <person name="de Haan M."/>
            <person name="Delius H."/>
            <person name="Durand P."/>
            <person name="Fairhead C."/>
            <person name="Feldmann H."/>
            <person name="Gaillon L."/>
            <person name="Galisson F."/>
            <person name="Gamo F.-J."/>
            <person name="Gancedo C."/>
            <person name="Goffeau A."/>
            <person name="Goulding S.E."/>
            <person name="Grivell L.A."/>
            <person name="Habbig B."/>
            <person name="Hand N.J."/>
            <person name="Hani J."/>
            <person name="Hattenhorst U."/>
            <person name="Hebling U."/>
            <person name="Hernando Y."/>
            <person name="Herrero E."/>
            <person name="Heumann K."/>
            <person name="Hiesel R."/>
            <person name="Hilger F."/>
            <person name="Hofmann B."/>
            <person name="Hollenberg C.P."/>
            <person name="Hughes B."/>
            <person name="Jauniaux J.-C."/>
            <person name="Kalogeropoulos A."/>
            <person name="Katsoulou C."/>
            <person name="Kordes E."/>
            <person name="Lafuente M.J."/>
            <person name="Landt O."/>
            <person name="Louis E.J."/>
            <person name="Maarse A.C."/>
            <person name="Madania A."/>
            <person name="Mannhaupt G."/>
            <person name="Marck C."/>
            <person name="Martin R.P."/>
            <person name="Mewes H.-W."/>
            <person name="Michaux G."/>
            <person name="Paces V."/>
            <person name="Parle-McDermott A.G."/>
            <person name="Pearson B.M."/>
            <person name="Perrin A."/>
            <person name="Pettersson B."/>
            <person name="Poch O."/>
            <person name="Pohl T.M."/>
            <person name="Poirey R."/>
            <person name="Portetelle D."/>
            <person name="Pujol A."/>
            <person name="Purnelle B."/>
            <person name="Ramezani Rad M."/>
            <person name="Rechmann S."/>
            <person name="Schwager C."/>
            <person name="Schweizer M."/>
            <person name="Sor F."/>
            <person name="Sterky F."/>
            <person name="Tarassov I.A."/>
            <person name="Teodoru C."/>
            <person name="Tettelin H."/>
            <person name="Thierry A."/>
            <person name="Tobiasch E."/>
            <person name="Tzermia M."/>
            <person name="Uhlen M."/>
            <person name="Unseld M."/>
            <person name="Valens M."/>
            <person name="Vandenbol M."/>
            <person name="Vetter I."/>
            <person name="Vlcek C."/>
            <person name="Voet M."/>
            <person name="Volckaert G."/>
            <person name="Voss H."/>
            <person name="Wambutt R."/>
            <person name="Wedler H."/>
            <person name="Wiemann S."/>
            <person name="Winsor B."/>
            <person name="Wolfe K.H."/>
            <person name="Zollner A."/>
            <person name="Zumstein E."/>
            <person name="Kleine K."/>
        </authorList>
    </citation>
    <scope>NUCLEOTIDE SEQUENCE [LARGE SCALE GENOMIC DNA]</scope>
    <source>
        <strain>ATCC 204508 / S288c</strain>
    </source>
</reference>
<reference key="3">
    <citation type="journal article" date="2014" name="G3 (Bethesda)">
        <title>The reference genome sequence of Saccharomyces cerevisiae: Then and now.</title>
        <authorList>
            <person name="Engel S.R."/>
            <person name="Dietrich F.S."/>
            <person name="Fisk D.G."/>
            <person name="Binkley G."/>
            <person name="Balakrishnan R."/>
            <person name="Costanzo M.C."/>
            <person name="Dwight S.S."/>
            <person name="Hitz B.C."/>
            <person name="Karra K."/>
            <person name="Nash R.S."/>
            <person name="Weng S."/>
            <person name="Wong E.D."/>
            <person name="Lloyd P."/>
            <person name="Skrzypek M.S."/>
            <person name="Miyasato S.R."/>
            <person name="Simison M."/>
            <person name="Cherry J.M."/>
        </authorList>
    </citation>
    <scope>GENOME REANNOTATION</scope>
    <source>
        <strain>ATCC 204508 / S288c</strain>
    </source>
</reference>
<reference key="4">
    <citation type="journal article" date="2007" name="Genome Res.">
        <title>Approaching a complete repository of sequence-verified protein-encoding clones for Saccharomyces cerevisiae.</title>
        <authorList>
            <person name="Hu Y."/>
            <person name="Rolfs A."/>
            <person name="Bhullar B."/>
            <person name="Murthy T.V.S."/>
            <person name="Zhu C."/>
            <person name="Berger M.F."/>
            <person name="Camargo A.A."/>
            <person name="Kelley F."/>
            <person name="McCarron S."/>
            <person name="Jepson D."/>
            <person name="Richardson A."/>
            <person name="Raphael J."/>
            <person name="Moreira D."/>
            <person name="Taycher E."/>
            <person name="Zuo D."/>
            <person name="Mohr S."/>
            <person name="Kane M.F."/>
            <person name="Williamson J."/>
            <person name="Simpson A.J.G."/>
            <person name="Bulyk M.L."/>
            <person name="Harlow E."/>
            <person name="Marsischky G."/>
            <person name="Kolodner R.D."/>
            <person name="LaBaer J."/>
        </authorList>
    </citation>
    <scope>NUCLEOTIDE SEQUENCE [GENOMIC DNA]</scope>
    <source>
        <strain>ATCC 204508 / S288c</strain>
    </source>
</reference>
<reference key="5">
    <citation type="journal article" date="1998" name="Mol. Cell. Biol.">
        <title>Preprotein translocase of the outer mitochondrial membrane: molecular dissection and assembly of the general import pore complex.</title>
        <authorList>
            <person name="Dekker P.J.T."/>
            <person name="Ryan M.T."/>
            <person name="Brix J."/>
            <person name="Mueller H."/>
            <person name="Hoenlinger A."/>
            <person name="Pfanner N."/>
        </authorList>
    </citation>
    <scope>IDENTIFICATION IN THE TOM COMPLEX</scope>
</reference>
<reference key="6">
    <citation type="journal article" date="2001" name="Nat. Struct. Biol.">
        <title>Multistep assembly of the protein import channel of the mitochondrial outer membrane.</title>
        <authorList>
            <person name="Model K."/>
            <person name="Meisinger C."/>
            <person name="Prinz T."/>
            <person name="Wiedemann N."/>
            <person name="Truscott K.N."/>
            <person name="Pfanner N."/>
            <person name="Ryan M.T."/>
        </authorList>
    </citation>
    <scope>FUNCTION</scope>
</reference>
<reference key="7">
    <citation type="journal article" date="2012" name="Proc. Natl. Acad. Sci. U.S.A.">
        <title>N-terminal acetylome analyses and functional insights of the N-terminal acetyltransferase NatB.</title>
        <authorList>
            <person name="Van Damme P."/>
            <person name="Lasa M."/>
            <person name="Polevoda B."/>
            <person name="Gazquez C."/>
            <person name="Elosegui-Artola A."/>
            <person name="Kim D.S."/>
            <person name="De Juan-Pardo E."/>
            <person name="Demeyer K."/>
            <person name="Hole K."/>
            <person name="Larrea E."/>
            <person name="Timmerman E."/>
            <person name="Prieto J."/>
            <person name="Arnesen T."/>
            <person name="Sherman F."/>
            <person name="Gevaert K."/>
            <person name="Aldabe R."/>
        </authorList>
    </citation>
    <scope>ACETYLATION [LARGE SCALE ANALYSIS] AT MET-1</scope>
    <scope>IDENTIFICATION BY MASS SPECTROMETRY [LARGE SCALE ANALYSIS]</scope>
</reference>
<proteinExistence type="evidence at protein level"/>
<organism>
    <name type="scientific">Saccharomyces cerevisiae (strain ATCC 204508 / S288c)</name>
    <name type="common">Baker's yeast</name>
    <dbReference type="NCBI Taxonomy" id="559292"/>
    <lineage>
        <taxon>Eukaryota</taxon>
        <taxon>Fungi</taxon>
        <taxon>Dikarya</taxon>
        <taxon>Ascomycota</taxon>
        <taxon>Saccharomycotina</taxon>
        <taxon>Saccharomycetes</taxon>
        <taxon>Saccharomycetales</taxon>
        <taxon>Saccharomycetaceae</taxon>
        <taxon>Saccharomyces</taxon>
    </lineage>
</organism>
<evidence type="ECO:0000255" key="1"/>
<evidence type="ECO:0000256" key="2">
    <source>
        <dbReference type="SAM" id="MobiDB-lite"/>
    </source>
</evidence>
<evidence type="ECO:0000269" key="3">
    <source>
    </source>
</evidence>
<evidence type="ECO:0000269" key="4">
    <source>
    </source>
</evidence>
<evidence type="ECO:0000305" key="5"/>
<evidence type="ECO:0007744" key="6">
    <source>
    </source>
</evidence>
<evidence type="ECO:0007829" key="7">
    <source>
        <dbReference type="PDB" id="7E4I"/>
    </source>
</evidence>